<name>PSB28_SYNE7</name>
<protein>
    <recommendedName>
        <fullName evidence="1">Photosystem II reaction center Psb28 protein</fullName>
    </recommendedName>
    <alternativeName>
        <fullName evidence="1">Photosystem II 13 kDa protein</fullName>
    </alternativeName>
    <alternativeName>
        <fullName evidence="1">Photosystem II reaction center W protein</fullName>
    </alternativeName>
</protein>
<dbReference type="EMBL" id="CP000100">
    <property type="protein sequence ID" value="ABB57709.1"/>
    <property type="molecule type" value="Genomic_DNA"/>
</dbReference>
<dbReference type="RefSeq" id="WP_011244721.1">
    <property type="nucleotide sequence ID" value="NZ_JACJTX010000001.1"/>
</dbReference>
<dbReference type="SMR" id="Q31ML0"/>
<dbReference type="STRING" id="1140.Synpcc7942_1679"/>
<dbReference type="PaxDb" id="1140-Synpcc7942_1679"/>
<dbReference type="GeneID" id="72430549"/>
<dbReference type="KEGG" id="syf:Synpcc7942_1679"/>
<dbReference type="eggNOG" id="ENOG5031GDS">
    <property type="taxonomic scope" value="Bacteria"/>
</dbReference>
<dbReference type="HOGENOM" id="CLU_137323_1_0_3"/>
<dbReference type="OrthoDB" id="559598at2"/>
<dbReference type="BioCyc" id="MetaCyc:SYNPCC7942_1679-MONOMER"/>
<dbReference type="BioCyc" id="SYNEL:SYNPCC7942_1679-MONOMER"/>
<dbReference type="Proteomes" id="UP000889800">
    <property type="component" value="Chromosome"/>
</dbReference>
<dbReference type="GO" id="GO:0009654">
    <property type="term" value="C:photosystem II oxygen evolving complex"/>
    <property type="evidence" value="ECO:0007669"/>
    <property type="project" value="InterPro"/>
</dbReference>
<dbReference type="GO" id="GO:0031676">
    <property type="term" value="C:plasma membrane-derived thylakoid membrane"/>
    <property type="evidence" value="ECO:0007669"/>
    <property type="project" value="UniProtKB-SubCell"/>
</dbReference>
<dbReference type="GO" id="GO:0015979">
    <property type="term" value="P:photosynthesis"/>
    <property type="evidence" value="ECO:0007669"/>
    <property type="project" value="UniProtKB-UniRule"/>
</dbReference>
<dbReference type="Gene3D" id="2.40.30.220">
    <property type="entry name" value="Photosystem II Psb28"/>
    <property type="match status" value="1"/>
</dbReference>
<dbReference type="HAMAP" id="MF_01370">
    <property type="entry name" value="PSII_Psb28"/>
    <property type="match status" value="1"/>
</dbReference>
<dbReference type="InterPro" id="IPR038676">
    <property type="entry name" value="Psb28_c1_sf"/>
</dbReference>
<dbReference type="InterPro" id="IPR005610">
    <property type="entry name" value="PSII_Psb28_class-1"/>
</dbReference>
<dbReference type="NCBIfam" id="TIGR03047">
    <property type="entry name" value="PS_II_psb28"/>
    <property type="match status" value="1"/>
</dbReference>
<dbReference type="PANTHER" id="PTHR34963">
    <property type="match status" value="1"/>
</dbReference>
<dbReference type="PANTHER" id="PTHR34963:SF2">
    <property type="entry name" value="PHOTOSYSTEM II REACTION CENTER PSB28 PROTEIN, CHLOROPLASTIC"/>
    <property type="match status" value="1"/>
</dbReference>
<dbReference type="Pfam" id="PF03912">
    <property type="entry name" value="Psb28"/>
    <property type="match status" value="1"/>
</dbReference>
<feature type="chain" id="PRO_0000271571" description="Photosystem II reaction center Psb28 protein">
    <location>
        <begin position="1"/>
        <end position="112"/>
    </location>
</feature>
<gene>
    <name evidence="1" type="primary">psb28</name>
    <name type="ordered locus">Synpcc7942_1679</name>
</gene>
<sequence length="112" mass="12672">MSAAIQFTRGIDEPVVPDVRLTRSRDGQNGTATFYFDEPQALVGEVRQDITGMYLLDDEGELATREVKAKFINGQPAGLEAVYLMRSPEEWDRFMRFMQRYAEANGLGFTEA</sequence>
<keyword id="KW-0472">Membrane</keyword>
<keyword id="KW-0602">Photosynthesis</keyword>
<keyword id="KW-0604">Photosystem II</keyword>
<keyword id="KW-1185">Reference proteome</keyword>
<keyword id="KW-0793">Thylakoid</keyword>
<organism>
    <name type="scientific">Synechococcus elongatus (strain ATCC 33912 / PCC 7942 / FACHB-805)</name>
    <name type="common">Anacystis nidulans R2</name>
    <dbReference type="NCBI Taxonomy" id="1140"/>
    <lineage>
        <taxon>Bacteria</taxon>
        <taxon>Bacillati</taxon>
        <taxon>Cyanobacteriota</taxon>
        <taxon>Cyanophyceae</taxon>
        <taxon>Synechococcales</taxon>
        <taxon>Synechococcaceae</taxon>
        <taxon>Synechococcus</taxon>
    </lineage>
</organism>
<comment type="subunit">
    <text evidence="1">Part of the photosystem II complex.</text>
</comment>
<comment type="subcellular location">
    <subcellularLocation>
        <location evidence="1">Cellular thylakoid membrane</location>
        <topology evidence="1">Peripheral membrane protein</topology>
        <orientation evidence="1">Cytoplasmic side</orientation>
    </subcellularLocation>
</comment>
<comment type="similarity">
    <text evidence="1">Belongs to the Psb28 family.</text>
</comment>
<evidence type="ECO:0000255" key="1">
    <source>
        <dbReference type="HAMAP-Rule" id="MF_01370"/>
    </source>
</evidence>
<proteinExistence type="inferred from homology"/>
<reference key="1">
    <citation type="submission" date="2005-08" db="EMBL/GenBank/DDBJ databases">
        <title>Complete sequence of chromosome 1 of Synechococcus elongatus PCC 7942.</title>
        <authorList>
            <consortium name="US DOE Joint Genome Institute"/>
            <person name="Copeland A."/>
            <person name="Lucas S."/>
            <person name="Lapidus A."/>
            <person name="Barry K."/>
            <person name="Detter J.C."/>
            <person name="Glavina T."/>
            <person name="Hammon N."/>
            <person name="Israni S."/>
            <person name="Pitluck S."/>
            <person name="Schmutz J."/>
            <person name="Larimer F."/>
            <person name="Land M."/>
            <person name="Kyrpides N."/>
            <person name="Lykidis A."/>
            <person name="Golden S."/>
            <person name="Richardson P."/>
        </authorList>
    </citation>
    <scope>NUCLEOTIDE SEQUENCE [LARGE SCALE GENOMIC DNA]</scope>
    <source>
        <strain>ATCC 33912 / PCC 7942 / FACHB-805</strain>
    </source>
</reference>
<accession>Q31ML0</accession>